<protein>
    <recommendedName>
        <fullName evidence="1">UDP-N-acetylglucosamine--N-acetylmuramyl-(pentapeptide) pyrophosphoryl-undecaprenol N-acetylglucosamine transferase</fullName>
        <ecNumber evidence="1">2.4.1.227</ecNumber>
    </recommendedName>
    <alternativeName>
        <fullName evidence="1">Undecaprenyl-PP-MurNAc-pentapeptide-UDPGlcNAc GlcNAc transferase</fullName>
    </alternativeName>
</protein>
<feature type="chain" id="PRO_1000117034" description="UDP-N-acetylglucosamine--N-acetylmuramyl-(pentapeptide) pyrophosphoryl-undecaprenol N-acetylglucosamine transferase">
    <location>
        <begin position="1"/>
        <end position="352"/>
    </location>
</feature>
<feature type="binding site" evidence="1">
    <location>
        <position position="195"/>
    </location>
    <ligand>
        <name>UDP-N-acetyl-alpha-D-glucosamine</name>
        <dbReference type="ChEBI" id="CHEBI:57705"/>
    </ligand>
</feature>
<feature type="binding site" evidence="1">
    <location>
        <position position="287"/>
    </location>
    <ligand>
        <name>UDP-N-acetyl-alpha-D-glucosamine</name>
        <dbReference type="ChEBI" id="CHEBI:57705"/>
    </ligand>
</feature>
<dbReference type="EC" id="2.4.1.227" evidence="1"/>
<dbReference type="EMBL" id="CP000920">
    <property type="protein sequence ID" value="ACO22012.1"/>
    <property type="molecule type" value="Genomic_DNA"/>
</dbReference>
<dbReference type="RefSeq" id="WP_000724816.1">
    <property type="nucleotide sequence ID" value="NC_012467.1"/>
</dbReference>
<dbReference type="SMR" id="C1CJF3"/>
<dbReference type="CAZy" id="GT28">
    <property type="family name" value="Glycosyltransferase Family 28"/>
</dbReference>
<dbReference type="KEGG" id="spp:SPP_0708"/>
<dbReference type="HOGENOM" id="CLU_037404_0_0_9"/>
<dbReference type="UniPathway" id="UPA00219"/>
<dbReference type="GO" id="GO:0005886">
    <property type="term" value="C:plasma membrane"/>
    <property type="evidence" value="ECO:0007669"/>
    <property type="project" value="UniProtKB-SubCell"/>
</dbReference>
<dbReference type="GO" id="GO:0050511">
    <property type="term" value="F:undecaprenyldiphospho-muramoylpentapeptide beta-N-acetylglucosaminyltransferase activity"/>
    <property type="evidence" value="ECO:0007669"/>
    <property type="project" value="UniProtKB-UniRule"/>
</dbReference>
<dbReference type="GO" id="GO:0005975">
    <property type="term" value="P:carbohydrate metabolic process"/>
    <property type="evidence" value="ECO:0007669"/>
    <property type="project" value="InterPro"/>
</dbReference>
<dbReference type="GO" id="GO:0051301">
    <property type="term" value="P:cell division"/>
    <property type="evidence" value="ECO:0007669"/>
    <property type="project" value="UniProtKB-KW"/>
</dbReference>
<dbReference type="GO" id="GO:0071555">
    <property type="term" value="P:cell wall organization"/>
    <property type="evidence" value="ECO:0007669"/>
    <property type="project" value="UniProtKB-KW"/>
</dbReference>
<dbReference type="GO" id="GO:0030259">
    <property type="term" value="P:lipid glycosylation"/>
    <property type="evidence" value="ECO:0007669"/>
    <property type="project" value="UniProtKB-UniRule"/>
</dbReference>
<dbReference type="GO" id="GO:0009252">
    <property type="term" value="P:peptidoglycan biosynthetic process"/>
    <property type="evidence" value="ECO:0007669"/>
    <property type="project" value="UniProtKB-UniRule"/>
</dbReference>
<dbReference type="GO" id="GO:0008360">
    <property type="term" value="P:regulation of cell shape"/>
    <property type="evidence" value="ECO:0007669"/>
    <property type="project" value="UniProtKB-KW"/>
</dbReference>
<dbReference type="CDD" id="cd03785">
    <property type="entry name" value="GT28_MurG"/>
    <property type="match status" value="1"/>
</dbReference>
<dbReference type="Gene3D" id="3.40.50.2000">
    <property type="entry name" value="Glycogen Phosphorylase B"/>
    <property type="match status" value="2"/>
</dbReference>
<dbReference type="HAMAP" id="MF_00033">
    <property type="entry name" value="MurG"/>
    <property type="match status" value="1"/>
</dbReference>
<dbReference type="InterPro" id="IPR006009">
    <property type="entry name" value="GlcNAc_MurG"/>
</dbReference>
<dbReference type="InterPro" id="IPR007235">
    <property type="entry name" value="Glyco_trans_28_C"/>
</dbReference>
<dbReference type="InterPro" id="IPR004276">
    <property type="entry name" value="GlycoTrans_28_N"/>
</dbReference>
<dbReference type="PANTHER" id="PTHR21015:SF27">
    <property type="entry name" value="UDP-N-ACETYLGLUCOSAMINE--N-ACETYLMURAMYL-(PENTAPEPTIDE) PYROPHOSPHORYL-UNDECAPRENOL N-ACETYLGLUCOSAMINE TRANSFERASE"/>
    <property type="match status" value="1"/>
</dbReference>
<dbReference type="PANTHER" id="PTHR21015">
    <property type="entry name" value="UDP-N-ACETYLGLUCOSAMINE--N-ACETYLMURAMYL-(PENTAPEPTIDE) PYROPHOSPHORYL-UNDECAPRENOL N-ACETYLGLUCOSAMINE TRANSFERASE 1"/>
    <property type="match status" value="1"/>
</dbReference>
<dbReference type="Pfam" id="PF04101">
    <property type="entry name" value="Glyco_tran_28_C"/>
    <property type="match status" value="1"/>
</dbReference>
<dbReference type="Pfam" id="PF03033">
    <property type="entry name" value="Glyco_transf_28"/>
    <property type="match status" value="1"/>
</dbReference>
<dbReference type="SUPFAM" id="SSF53756">
    <property type="entry name" value="UDP-Glycosyltransferase/glycogen phosphorylase"/>
    <property type="match status" value="1"/>
</dbReference>
<accession>C1CJF3</accession>
<evidence type="ECO:0000255" key="1">
    <source>
        <dbReference type="HAMAP-Rule" id="MF_00033"/>
    </source>
</evidence>
<gene>
    <name evidence="1" type="primary">murG</name>
    <name type="ordered locus">SPP_0708</name>
</gene>
<sequence>MKKIVFTGGGTVGHVTLNLLLMPKFIEDGWEVHYIGDKRGIEHQEILKSGLDVTFHSIATGKLRRYFSWQNMLDVFKVCWGIVQSLFIMLRLRPQTLFSKGGFVSVPPVIAARVSGVPVFIHESDLSMGLANKIAYKFATKMYSTFEQASSLSKVEHVGAVTKVSDQKNPEPDELVDIQSHFNHKLPTVLFVGGSAGARVFNQLVTDHKKELTERYNIINLTGDSSLNELSQNLFRVDYVTDLYQPLMELADIVVTRGGANTIFELLAIAKLHVIVPLGREASRGDQLENAAYFVKKGYAEDLQESDLTLDSLEEKLSHLLSHKEDYQAKMKASKELKSLADFYQLLKKDLS</sequence>
<keyword id="KW-0131">Cell cycle</keyword>
<keyword id="KW-0132">Cell division</keyword>
<keyword id="KW-1003">Cell membrane</keyword>
<keyword id="KW-0133">Cell shape</keyword>
<keyword id="KW-0961">Cell wall biogenesis/degradation</keyword>
<keyword id="KW-0328">Glycosyltransferase</keyword>
<keyword id="KW-0472">Membrane</keyword>
<keyword id="KW-0573">Peptidoglycan synthesis</keyword>
<keyword id="KW-0808">Transferase</keyword>
<proteinExistence type="inferred from homology"/>
<reference key="1">
    <citation type="journal article" date="2010" name="Genome Biol.">
        <title>Structure and dynamics of the pan-genome of Streptococcus pneumoniae and closely related species.</title>
        <authorList>
            <person name="Donati C."/>
            <person name="Hiller N.L."/>
            <person name="Tettelin H."/>
            <person name="Muzzi A."/>
            <person name="Croucher N.J."/>
            <person name="Angiuoli S.V."/>
            <person name="Oggioni M."/>
            <person name="Dunning Hotopp J.C."/>
            <person name="Hu F.Z."/>
            <person name="Riley D.R."/>
            <person name="Covacci A."/>
            <person name="Mitchell T.J."/>
            <person name="Bentley S.D."/>
            <person name="Kilian M."/>
            <person name="Ehrlich G.D."/>
            <person name="Rappuoli R."/>
            <person name="Moxon E.R."/>
            <person name="Masignani V."/>
        </authorList>
    </citation>
    <scope>NUCLEOTIDE SEQUENCE [LARGE SCALE GENOMIC DNA]</scope>
    <source>
        <strain>P1031</strain>
    </source>
</reference>
<organism>
    <name type="scientific">Streptococcus pneumoniae (strain P1031)</name>
    <dbReference type="NCBI Taxonomy" id="488223"/>
    <lineage>
        <taxon>Bacteria</taxon>
        <taxon>Bacillati</taxon>
        <taxon>Bacillota</taxon>
        <taxon>Bacilli</taxon>
        <taxon>Lactobacillales</taxon>
        <taxon>Streptococcaceae</taxon>
        <taxon>Streptococcus</taxon>
    </lineage>
</organism>
<name>MURG_STRZP</name>
<comment type="function">
    <text evidence="1">Cell wall formation. Catalyzes the transfer of a GlcNAc subunit on undecaprenyl-pyrophosphoryl-MurNAc-pentapeptide (lipid intermediate I) to form undecaprenyl-pyrophosphoryl-MurNAc-(pentapeptide)GlcNAc (lipid intermediate II).</text>
</comment>
<comment type="catalytic activity">
    <reaction evidence="1">
        <text>Mur2Ac(oyl-L-Ala-gamma-D-Glu-L-Lys-D-Ala-D-Ala)-di-trans,octa-cis-undecaprenyl diphosphate + UDP-N-acetyl-alpha-D-glucosamine = beta-D-GlcNAc-(1-&gt;4)-Mur2Ac(oyl-L-Ala-gamma-D-Glu-L-Lys-D-Ala-D-Ala)-di-trans,octa-cis-undecaprenyl diphosphate + UDP + H(+)</text>
        <dbReference type="Rhea" id="RHEA:23192"/>
        <dbReference type="ChEBI" id="CHEBI:15378"/>
        <dbReference type="ChEBI" id="CHEBI:57705"/>
        <dbReference type="ChEBI" id="CHEBI:58223"/>
        <dbReference type="ChEBI" id="CHEBI:60032"/>
        <dbReference type="ChEBI" id="CHEBI:60033"/>
        <dbReference type="EC" id="2.4.1.227"/>
    </reaction>
</comment>
<comment type="pathway">
    <text evidence="1">Cell wall biogenesis; peptidoglycan biosynthesis.</text>
</comment>
<comment type="subcellular location">
    <subcellularLocation>
        <location evidence="1">Cell membrane</location>
        <topology evidence="1">Peripheral membrane protein</topology>
        <orientation evidence="1">Cytoplasmic side</orientation>
    </subcellularLocation>
</comment>
<comment type="similarity">
    <text evidence="1">Belongs to the glycosyltransferase 28 family. MurG subfamily.</text>
</comment>